<comment type="function">
    <text evidence="1 3 4">Inhibits cell division during the SOS response. Affects a later stage of the cell division protein assembly, after the assembly of the Z ring, by probably suppressing recruitment of FtsL and/or DivIC to the division machinery (By similarity).</text>
</comment>
<comment type="subcellular location">
    <subcellularLocation>
        <location evidence="5">Cytoplasm</location>
    </subcellularLocation>
</comment>
<comment type="induction">
    <text evidence="3">Repressed by LexA.</text>
</comment>
<comment type="similarity">
    <text evidence="5">Belongs to the YneA family.</text>
</comment>
<protein>
    <recommendedName>
        <fullName>Cell division suppressor protein YneA</fullName>
    </recommendedName>
</protein>
<dbReference type="EMBL" id="Z73234">
    <property type="protein sequence ID" value="CAA97614.1"/>
    <property type="molecule type" value="Genomic_DNA"/>
</dbReference>
<dbReference type="EMBL" id="AL009126">
    <property type="protein sequence ID" value="CAB13670.1"/>
    <property type="molecule type" value="Genomic_DNA"/>
</dbReference>
<dbReference type="PIR" id="F69890">
    <property type="entry name" value="F69890"/>
</dbReference>
<dbReference type="RefSeq" id="WP_003231598.1">
    <property type="nucleotide sequence ID" value="NZ_OZ025638.1"/>
</dbReference>
<dbReference type="SMR" id="Q45056"/>
<dbReference type="FunCoup" id="Q45056">
    <property type="interactions" value="48"/>
</dbReference>
<dbReference type="STRING" id="224308.BSU17860"/>
<dbReference type="PaxDb" id="224308-BSU17860"/>
<dbReference type="EnsemblBacteria" id="CAB13670">
    <property type="protein sequence ID" value="CAB13670"/>
    <property type="gene ID" value="BSU_17860"/>
</dbReference>
<dbReference type="GeneID" id="936112"/>
<dbReference type="KEGG" id="bsu:BSU17860"/>
<dbReference type="PATRIC" id="fig|224308.43.peg.1892"/>
<dbReference type="eggNOG" id="COG1388">
    <property type="taxonomic scope" value="Bacteria"/>
</dbReference>
<dbReference type="InParanoid" id="Q45056"/>
<dbReference type="OrthoDB" id="2679564at2"/>
<dbReference type="BioCyc" id="BSUB:BSU17860-MONOMER"/>
<dbReference type="Proteomes" id="UP000001570">
    <property type="component" value="Chromosome"/>
</dbReference>
<dbReference type="GO" id="GO:0005737">
    <property type="term" value="C:cytoplasm"/>
    <property type="evidence" value="ECO:0007669"/>
    <property type="project" value="UniProtKB-SubCell"/>
</dbReference>
<dbReference type="GO" id="GO:0000917">
    <property type="term" value="P:division septum assembly"/>
    <property type="evidence" value="ECO:0007669"/>
    <property type="project" value="UniProtKB-KW"/>
</dbReference>
<dbReference type="GO" id="GO:0006281">
    <property type="term" value="P:DNA repair"/>
    <property type="evidence" value="ECO:0007669"/>
    <property type="project" value="UniProtKB-KW"/>
</dbReference>
<dbReference type="GO" id="GO:0051782">
    <property type="term" value="P:negative regulation of cell division"/>
    <property type="evidence" value="ECO:0007669"/>
    <property type="project" value="UniProtKB-UniRule"/>
</dbReference>
<dbReference type="GO" id="GO:0009432">
    <property type="term" value="P:SOS response"/>
    <property type="evidence" value="ECO:0007669"/>
    <property type="project" value="UniProtKB-UniRule"/>
</dbReference>
<dbReference type="CDD" id="cd00118">
    <property type="entry name" value="LysM"/>
    <property type="match status" value="1"/>
</dbReference>
<dbReference type="Gene3D" id="3.10.350.10">
    <property type="entry name" value="LysM domain"/>
    <property type="match status" value="1"/>
</dbReference>
<dbReference type="HAMAP" id="MF_02014">
    <property type="entry name" value="YneA"/>
    <property type="match status" value="1"/>
</dbReference>
<dbReference type="InterPro" id="IPR022887">
    <property type="entry name" value="Cell_div_suppressor_YneA"/>
</dbReference>
<dbReference type="InterPro" id="IPR018392">
    <property type="entry name" value="LysM_dom"/>
</dbReference>
<dbReference type="InterPro" id="IPR036779">
    <property type="entry name" value="LysM_dom_sf"/>
</dbReference>
<dbReference type="NCBIfam" id="NF010723">
    <property type="entry name" value="PRK14125.1"/>
    <property type="match status" value="1"/>
</dbReference>
<dbReference type="Pfam" id="PF01476">
    <property type="entry name" value="LysM"/>
    <property type="match status" value="1"/>
</dbReference>
<dbReference type="SMART" id="SM00257">
    <property type="entry name" value="LysM"/>
    <property type="match status" value="1"/>
</dbReference>
<dbReference type="SUPFAM" id="SSF54106">
    <property type="entry name" value="LysM domain"/>
    <property type="match status" value="1"/>
</dbReference>
<dbReference type="PROSITE" id="PS51782">
    <property type="entry name" value="LYSM"/>
    <property type="match status" value="1"/>
</dbReference>
<gene>
    <name type="primary">yneA</name>
    <name type="ordered locus">BSU17860</name>
</gene>
<proteinExistence type="evidence at protein level"/>
<reference key="1">
    <citation type="journal article" date="1996" name="Microbiology">
        <title>New genes in the 170 degrees region of the Bacillus subtilis genome encode DNA gyrase subunits, a thioredoxin, a xylanase and an amino acid transporter.</title>
        <authorList>
            <person name="Rose M."/>
            <person name="Entian K.-D."/>
        </authorList>
    </citation>
    <scope>NUCLEOTIDE SEQUENCE [GENOMIC DNA]</scope>
    <source>
        <strain>168</strain>
    </source>
</reference>
<reference key="2">
    <citation type="journal article" date="1997" name="Nature">
        <title>The complete genome sequence of the Gram-positive bacterium Bacillus subtilis.</title>
        <authorList>
            <person name="Kunst F."/>
            <person name="Ogasawara N."/>
            <person name="Moszer I."/>
            <person name="Albertini A.M."/>
            <person name="Alloni G."/>
            <person name="Azevedo V."/>
            <person name="Bertero M.G."/>
            <person name="Bessieres P."/>
            <person name="Bolotin A."/>
            <person name="Borchert S."/>
            <person name="Borriss R."/>
            <person name="Boursier L."/>
            <person name="Brans A."/>
            <person name="Braun M."/>
            <person name="Brignell S.C."/>
            <person name="Bron S."/>
            <person name="Brouillet S."/>
            <person name="Bruschi C.V."/>
            <person name="Caldwell B."/>
            <person name="Capuano V."/>
            <person name="Carter N.M."/>
            <person name="Choi S.-K."/>
            <person name="Codani J.-J."/>
            <person name="Connerton I.F."/>
            <person name="Cummings N.J."/>
            <person name="Daniel R.A."/>
            <person name="Denizot F."/>
            <person name="Devine K.M."/>
            <person name="Duesterhoeft A."/>
            <person name="Ehrlich S.D."/>
            <person name="Emmerson P.T."/>
            <person name="Entian K.-D."/>
            <person name="Errington J."/>
            <person name="Fabret C."/>
            <person name="Ferrari E."/>
            <person name="Foulger D."/>
            <person name="Fritz C."/>
            <person name="Fujita M."/>
            <person name="Fujita Y."/>
            <person name="Fuma S."/>
            <person name="Galizzi A."/>
            <person name="Galleron N."/>
            <person name="Ghim S.-Y."/>
            <person name="Glaser P."/>
            <person name="Goffeau A."/>
            <person name="Golightly E.J."/>
            <person name="Grandi G."/>
            <person name="Guiseppi G."/>
            <person name="Guy B.J."/>
            <person name="Haga K."/>
            <person name="Haiech J."/>
            <person name="Harwood C.R."/>
            <person name="Henaut A."/>
            <person name="Hilbert H."/>
            <person name="Holsappel S."/>
            <person name="Hosono S."/>
            <person name="Hullo M.-F."/>
            <person name="Itaya M."/>
            <person name="Jones L.-M."/>
            <person name="Joris B."/>
            <person name="Karamata D."/>
            <person name="Kasahara Y."/>
            <person name="Klaerr-Blanchard M."/>
            <person name="Klein C."/>
            <person name="Kobayashi Y."/>
            <person name="Koetter P."/>
            <person name="Koningstein G."/>
            <person name="Krogh S."/>
            <person name="Kumano M."/>
            <person name="Kurita K."/>
            <person name="Lapidus A."/>
            <person name="Lardinois S."/>
            <person name="Lauber J."/>
            <person name="Lazarevic V."/>
            <person name="Lee S.-M."/>
            <person name="Levine A."/>
            <person name="Liu H."/>
            <person name="Masuda S."/>
            <person name="Mauel C."/>
            <person name="Medigue C."/>
            <person name="Medina N."/>
            <person name="Mellado R.P."/>
            <person name="Mizuno M."/>
            <person name="Moestl D."/>
            <person name="Nakai S."/>
            <person name="Noback M."/>
            <person name="Noone D."/>
            <person name="O'Reilly M."/>
            <person name="Ogawa K."/>
            <person name="Ogiwara A."/>
            <person name="Oudega B."/>
            <person name="Park S.-H."/>
            <person name="Parro V."/>
            <person name="Pohl T.M."/>
            <person name="Portetelle D."/>
            <person name="Porwollik S."/>
            <person name="Prescott A.M."/>
            <person name="Presecan E."/>
            <person name="Pujic P."/>
            <person name="Purnelle B."/>
            <person name="Rapoport G."/>
            <person name="Rey M."/>
            <person name="Reynolds S."/>
            <person name="Rieger M."/>
            <person name="Rivolta C."/>
            <person name="Rocha E."/>
            <person name="Roche B."/>
            <person name="Rose M."/>
            <person name="Sadaie Y."/>
            <person name="Sato T."/>
            <person name="Scanlan E."/>
            <person name="Schleich S."/>
            <person name="Schroeter R."/>
            <person name="Scoffone F."/>
            <person name="Sekiguchi J."/>
            <person name="Sekowska A."/>
            <person name="Seror S.J."/>
            <person name="Serror P."/>
            <person name="Shin B.-S."/>
            <person name="Soldo B."/>
            <person name="Sorokin A."/>
            <person name="Tacconi E."/>
            <person name="Takagi T."/>
            <person name="Takahashi H."/>
            <person name="Takemaru K."/>
            <person name="Takeuchi M."/>
            <person name="Tamakoshi A."/>
            <person name="Tanaka T."/>
            <person name="Terpstra P."/>
            <person name="Tognoni A."/>
            <person name="Tosato V."/>
            <person name="Uchiyama S."/>
            <person name="Vandenbol M."/>
            <person name="Vannier F."/>
            <person name="Vassarotti A."/>
            <person name="Viari A."/>
            <person name="Wambutt R."/>
            <person name="Wedler E."/>
            <person name="Wedler H."/>
            <person name="Weitzenegger T."/>
            <person name="Winters P."/>
            <person name="Wipat A."/>
            <person name="Yamamoto H."/>
            <person name="Yamane K."/>
            <person name="Yasumoto K."/>
            <person name="Yata K."/>
            <person name="Yoshida K."/>
            <person name="Yoshikawa H.-F."/>
            <person name="Zumstein E."/>
            <person name="Yoshikawa H."/>
            <person name="Danchin A."/>
        </authorList>
    </citation>
    <scope>NUCLEOTIDE SEQUENCE [LARGE SCALE GENOMIC DNA]</scope>
    <source>
        <strain>168</strain>
    </source>
</reference>
<reference key="3">
    <citation type="journal article" date="2003" name="Mol. Microbiol.">
        <title>Identification of a protein, YneA, responsible for cell division suppression during the SOS response in Bacillus subtilis.</title>
        <authorList>
            <person name="Kawai Y."/>
            <person name="Moriya S."/>
            <person name="Ogasawara N."/>
        </authorList>
    </citation>
    <scope>FUNCTION AS SUPPRESSOR OF CELL DIVISION</scope>
    <scope>INDUCTION</scope>
    <source>
        <strain>168</strain>
    </source>
</reference>
<reference key="4">
    <citation type="journal article" date="2006" name="Microbiology">
        <title>Bacillus subtilis EzrA and FtsL synergistically regulate FtsZ ring dynamics during cell division.</title>
        <authorList>
            <person name="Kawai Y."/>
            <person name="Ogasawara N."/>
        </authorList>
    </citation>
    <scope>FUNCTION AS SUPPRESSOR OF CELL DIVISION</scope>
    <source>
        <strain>168</strain>
    </source>
</reference>
<accession>Q45056</accession>
<accession>Q796H0</accession>
<organism>
    <name type="scientific">Bacillus subtilis (strain 168)</name>
    <dbReference type="NCBI Taxonomy" id="224308"/>
    <lineage>
        <taxon>Bacteria</taxon>
        <taxon>Bacillati</taxon>
        <taxon>Bacillota</taxon>
        <taxon>Bacilli</taxon>
        <taxon>Bacillales</taxon>
        <taxon>Bacillaceae</taxon>
        <taxon>Bacillus</taxon>
    </lineage>
</organism>
<sequence>MIMSKESIIFVGLFTVILSAVILMLSYTSSGQELNQYVKIEVQQGDTLWSIADQVADTKKINKNDFIEWVADKNQLQTSDIQPGDELVIPLKKKHQDAYELATVR</sequence>
<evidence type="ECO:0000250" key="1"/>
<evidence type="ECO:0000255" key="2">
    <source>
        <dbReference type="PROSITE-ProRule" id="PRU01118"/>
    </source>
</evidence>
<evidence type="ECO:0000269" key="3">
    <source>
    </source>
</evidence>
<evidence type="ECO:0000269" key="4">
    <source>
    </source>
</evidence>
<evidence type="ECO:0000305" key="5"/>
<name>YNEA_BACSU</name>
<feature type="chain" id="PRO_0000346641" description="Cell division suppressor protein YneA">
    <location>
        <begin position="1"/>
        <end position="105"/>
    </location>
</feature>
<feature type="domain" description="LysM" evidence="2">
    <location>
        <begin position="38"/>
        <end position="89"/>
    </location>
</feature>
<keyword id="KW-0131">Cell cycle</keyword>
<keyword id="KW-0132">Cell division</keyword>
<keyword id="KW-0963">Cytoplasm</keyword>
<keyword id="KW-0227">DNA damage</keyword>
<keyword id="KW-0234">DNA repair</keyword>
<keyword id="KW-1185">Reference proteome</keyword>
<keyword id="KW-0717">Septation</keyword>
<keyword id="KW-0742">SOS response</keyword>